<accession>Q5HCM4</accession>
<keyword id="KW-0028">Amino-acid biosynthesis</keyword>
<keyword id="KW-0963">Cytoplasm</keyword>
<keyword id="KW-0368">Histidine biosynthesis</keyword>
<keyword id="KW-0456">Lyase</keyword>
<evidence type="ECO:0000255" key="1">
    <source>
        <dbReference type="HAMAP-Rule" id="MF_01013"/>
    </source>
</evidence>
<gene>
    <name evidence="1" type="primary">hisF</name>
    <name type="ordered locus">SACOL2697</name>
</gene>
<sequence>MIKKRIIPCLDVKDGRVVKGIQFKGLRDIGNPVDLAMYYNEAGADELVFLDISKTEEGHSLMLEVIEQTASRLFIPLTVGGGIQSLDDITQLLNHGADKVSLNSSALKNPQLIKQASDKFGRQCICIAIDSYYDPERKAHYCCTTGGKKMTNIKVYDWVQQVEQLGAGELLVTSMGHDGMKQGFDIEHLANIKSLVNIPIIASGGGGNAQHFVELFDQTDVSAGLAASILHDRETTVQSIKEVIRQGGIAVR</sequence>
<feature type="chain" id="PRO_0000142232" description="Imidazole glycerol phosphate synthase subunit HisF">
    <location>
        <begin position="1"/>
        <end position="252"/>
    </location>
</feature>
<feature type="active site" evidence="1">
    <location>
        <position position="11"/>
    </location>
</feature>
<feature type="active site" evidence="1">
    <location>
        <position position="130"/>
    </location>
</feature>
<dbReference type="EC" id="4.3.2.10" evidence="1"/>
<dbReference type="EMBL" id="CP000046">
    <property type="protein sequence ID" value="AAW37345.1"/>
    <property type="molecule type" value="Genomic_DNA"/>
</dbReference>
<dbReference type="SMR" id="Q5HCM4"/>
<dbReference type="KEGG" id="sac:SACOL2697"/>
<dbReference type="HOGENOM" id="CLU_048577_4_0_9"/>
<dbReference type="UniPathway" id="UPA00031">
    <property type="reaction ID" value="UER00010"/>
</dbReference>
<dbReference type="Proteomes" id="UP000000530">
    <property type="component" value="Chromosome"/>
</dbReference>
<dbReference type="GO" id="GO:0005737">
    <property type="term" value="C:cytoplasm"/>
    <property type="evidence" value="ECO:0007669"/>
    <property type="project" value="UniProtKB-SubCell"/>
</dbReference>
<dbReference type="GO" id="GO:0000107">
    <property type="term" value="F:imidazoleglycerol-phosphate synthase activity"/>
    <property type="evidence" value="ECO:0007669"/>
    <property type="project" value="UniProtKB-UniRule"/>
</dbReference>
<dbReference type="GO" id="GO:0016829">
    <property type="term" value="F:lyase activity"/>
    <property type="evidence" value="ECO:0007669"/>
    <property type="project" value="UniProtKB-KW"/>
</dbReference>
<dbReference type="GO" id="GO:0000105">
    <property type="term" value="P:L-histidine biosynthetic process"/>
    <property type="evidence" value="ECO:0007669"/>
    <property type="project" value="UniProtKB-UniRule"/>
</dbReference>
<dbReference type="CDD" id="cd04731">
    <property type="entry name" value="HisF"/>
    <property type="match status" value="1"/>
</dbReference>
<dbReference type="FunFam" id="3.20.20.70:FF:000462">
    <property type="entry name" value="Multifunctional fusion protein"/>
    <property type="match status" value="1"/>
</dbReference>
<dbReference type="Gene3D" id="3.20.20.70">
    <property type="entry name" value="Aldolase class I"/>
    <property type="match status" value="1"/>
</dbReference>
<dbReference type="HAMAP" id="MF_01013">
    <property type="entry name" value="HisF"/>
    <property type="match status" value="1"/>
</dbReference>
<dbReference type="InterPro" id="IPR013785">
    <property type="entry name" value="Aldolase_TIM"/>
</dbReference>
<dbReference type="InterPro" id="IPR006062">
    <property type="entry name" value="His_biosynth"/>
</dbReference>
<dbReference type="InterPro" id="IPR004651">
    <property type="entry name" value="HisF"/>
</dbReference>
<dbReference type="InterPro" id="IPR050064">
    <property type="entry name" value="IGPS_HisA/HisF"/>
</dbReference>
<dbReference type="InterPro" id="IPR011060">
    <property type="entry name" value="RibuloseP-bd_barrel"/>
</dbReference>
<dbReference type="NCBIfam" id="TIGR00735">
    <property type="entry name" value="hisF"/>
    <property type="match status" value="1"/>
</dbReference>
<dbReference type="PANTHER" id="PTHR21235:SF2">
    <property type="entry name" value="IMIDAZOLE GLYCEROL PHOSPHATE SYNTHASE HISHF"/>
    <property type="match status" value="1"/>
</dbReference>
<dbReference type="PANTHER" id="PTHR21235">
    <property type="entry name" value="IMIDAZOLE GLYCEROL PHOSPHATE SYNTHASE SUBUNIT HISF/H IGP SYNTHASE SUBUNIT HISF/H"/>
    <property type="match status" value="1"/>
</dbReference>
<dbReference type="Pfam" id="PF00977">
    <property type="entry name" value="His_biosynth"/>
    <property type="match status" value="1"/>
</dbReference>
<dbReference type="SUPFAM" id="SSF51366">
    <property type="entry name" value="Ribulose-phoshate binding barrel"/>
    <property type="match status" value="1"/>
</dbReference>
<proteinExistence type="inferred from homology"/>
<name>HIS6_STAAC</name>
<protein>
    <recommendedName>
        <fullName evidence="1">Imidazole glycerol phosphate synthase subunit HisF</fullName>
        <ecNumber evidence="1">4.3.2.10</ecNumber>
    </recommendedName>
    <alternativeName>
        <fullName evidence="1">IGP synthase cyclase subunit</fullName>
    </alternativeName>
    <alternativeName>
        <fullName evidence="1">IGP synthase subunit HisF</fullName>
    </alternativeName>
    <alternativeName>
        <fullName evidence="1">ImGP synthase subunit HisF</fullName>
        <shortName evidence="1">IGPS subunit HisF</shortName>
    </alternativeName>
</protein>
<reference key="1">
    <citation type="journal article" date="2005" name="J. Bacteriol.">
        <title>Insights on evolution of virulence and resistance from the complete genome analysis of an early methicillin-resistant Staphylococcus aureus strain and a biofilm-producing methicillin-resistant Staphylococcus epidermidis strain.</title>
        <authorList>
            <person name="Gill S.R."/>
            <person name="Fouts D.E."/>
            <person name="Archer G.L."/>
            <person name="Mongodin E.F."/>
            <person name="DeBoy R.T."/>
            <person name="Ravel J."/>
            <person name="Paulsen I.T."/>
            <person name="Kolonay J.F."/>
            <person name="Brinkac L.M."/>
            <person name="Beanan M.J."/>
            <person name="Dodson R.J."/>
            <person name="Daugherty S.C."/>
            <person name="Madupu R."/>
            <person name="Angiuoli S.V."/>
            <person name="Durkin A.S."/>
            <person name="Haft D.H."/>
            <person name="Vamathevan J.J."/>
            <person name="Khouri H."/>
            <person name="Utterback T.R."/>
            <person name="Lee C."/>
            <person name="Dimitrov G."/>
            <person name="Jiang L."/>
            <person name="Qin H."/>
            <person name="Weidman J."/>
            <person name="Tran K."/>
            <person name="Kang K.H."/>
            <person name="Hance I.R."/>
            <person name="Nelson K.E."/>
            <person name="Fraser C.M."/>
        </authorList>
    </citation>
    <scope>NUCLEOTIDE SEQUENCE [LARGE SCALE GENOMIC DNA]</scope>
    <source>
        <strain>COL</strain>
    </source>
</reference>
<comment type="function">
    <text evidence="1">IGPS catalyzes the conversion of PRFAR and glutamine to IGP, AICAR and glutamate. The HisF subunit catalyzes the cyclization activity that produces IGP and AICAR from PRFAR using the ammonia provided by the HisH subunit.</text>
</comment>
<comment type="catalytic activity">
    <reaction evidence="1">
        <text>5-[(5-phospho-1-deoxy-D-ribulos-1-ylimino)methylamino]-1-(5-phospho-beta-D-ribosyl)imidazole-4-carboxamide + L-glutamine = D-erythro-1-(imidazol-4-yl)glycerol 3-phosphate + 5-amino-1-(5-phospho-beta-D-ribosyl)imidazole-4-carboxamide + L-glutamate + H(+)</text>
        <dbReference type="Rhea" id="RHEA:24793"/>
        <dbReference type="ChEBI" id="CHEBI:15378"/>
        <dbReference type="ChEBI" id="CHEBI:29985"/>
        <dbReference type="ChEBI" id="CHEBI:58278"/>
        <dbReference type="ChEBI" id="CHEBI:58359"/>
        <dbReference type="ChEBI" id="CHEBI:58475"/>
        <dbReference type="ChEBI" id="CHEBI:58525"/>
        <dbReference type="EC" id="4.3.2.10"/>
    </reaction>
</comment>
<comment type="pathway">
    <text evidence="1">Amino-acid biosynthesis; L-histidine biosynthesis; L-histidine from 5-phospho-alpha-D-ribose 1-diphosphate: step 5/9.</text>
</comment>
<comment type="subunit">
    <text evidence="1">Heterodimer of HisH and HisF.</text>
</comment>
<comment type="subcellular location">
    <subcellularLocation>
        <location evidence="1">Cytoplasm</location>
    </subcellularLocation>
</comment>
<comment type="similarity">
    <text evidence="1">Belongs to the HisA/HisF family.</text>
</comment>
<organism>
    <name type="scientific">Staphylococcus aureus (strain COL)</name>
    <dbReference type="NCBI Taxonomy" id="93062"/>
    <lineage>
        <taxon>Bacteria</taxon>
        <taxon>Bacillati</taxon>
        <taxon>Bacillota</taxon>
        <taxon>Bacilli</taxon>
        <taxon>Bacillales</taxon>
        <taxon>Staphylococcaceae</taxon>
        <taxon>Staphylococcus</taxon>
    </lineage>
</organism>